<name>RS2_LEPBJ</name>
<organism>
    <name type="scientific">Leptospira borgpetersenii serovar Hardjo-bovis (strain JB197)</name>
    <dbReference type="NCBI Taxonomy" id="355277"/>
    <lineage>
        <taxon>Bacteria</taxon>
        <taxon>Pseudomonadati</taxon>
        <taxon>Spirochaetota</taxon>
        <taxon>Spirochaetia</taxon>
        <taxon>Leptospirales</taxon>
        <taxon>Leptospiraceae</taxon>
        <taxon>Leptospira</taxon>
    </lineage>
</organism>
<comment type="similarity">
    <text evidence="1">Belongs to the universal ribosomal protein uS2 family.</text>
</comment>
<comment type="sequence caution" evidence="3">
    <conflict type="erroneous initiation">
        <sequence resource="EMBL-CDS" id="ABJ75548"/>
    </conflict>
</comment>
<keyword id="KW-0687">Ribonucleoprotein</keyword>
<keyword id="KW-0689">Ribosomal protein</keyword>
<proteinExistence type="inferred from homology"/>
<dbReference type="EMBL" id="CP000350">
    <property type="protein sequence ID" value="ABJ75548.1"/>
    <property type="status" value="ALT_INIT"/>
    <property type="molecule type" value="Genomic_DNA"/>
</dbReference>
<dbReference type="RefSeq" id="WP_011669748.1">
    <property type="nucleotide sequence ID" value="NC_008510.1"/>
</dbReference>
<dbReference type="SMR" id="Q04U72"/>
<dbReference type="KEGG" id="lbj:LBJ_0904"/>
<dbReference type="PATRIC" id="fig|355276.3.peg.1168"/>
<dbReference type="HOGENOM" id="CLU_040318_1_0_12"/>
<dbReference type="Proteomes" id="UP000000656">
    <property type="component" value="Chromosome 1"/>
</dbReference>
<dbReference type="GO" id="GO:0022627">
    <property type="term" value="C:cytosolic small ribosomal subunit"/>
    <property type="evidence" value="ECO:0007669"/>
    <property type="project" value="TreeGrafter"/>
</dbReference>
<dbReference type="GO" id="GO:0003735">
    <property type="term" value="F:structural constituent of ribosome"/>
    <property type="evidence" value="ECO:0007669"/>
    <property type="project" value="InterPro"/>
</dbReference>
<dbReference type="GO" id="GO:0006412">
    <property type="term" value="P:translation"/>
    <property type="evidence" value="ECO:0007669"/>
    <property type="project" value="UniProtKB-UniRule"/>
</dbReference>
<dbReference type="CDD" id="cd01425">
    <property type="entry name" value="RPS2"/>
    <property type="match status" value="1"/>
</dbReference>
<dbReference type="FunFam" id="1.10.287.610:FF:000001">
    <property type="entry name" value="30S ribosomal protein S2"/>
    <property type="match status" value="1"/>
</dbReference>
<dbReference type="Gene3D" id="3.40.50.10490">
    <property type="entry name" value="Glucose-6-phosphate isomerase like protein, domain 1"/>
    <property type="match status" value="1"/>
</dbReference>
<dbReference type="Gene3D" id="1.10.287.610">
    <property type="entry name" value="Helix hairpin bin"/>
    <property type="match status" value="1"/>
</dbReference>
<dbReference type="HAMAP" id="MF_00291_B">
    <property type="entry name" value="Ribosomal_uS2_B"/>
    <property type="match status" value="1"/>
</dbReference>
<dbReference type="InterPro" id="IPR001865">
    <property type="entry name" value="Ribosomal_uS2"/>
</dbReference>
<dbReference type="InterPro" id="IPR005706">
    <property type="entry name" value="Ribosomal_uS2_bac/mit/plastid"/>
</dbReference>
<dbReference type="InterPro" id="IPR018130">
    <property type="entry name" value="Ribosomal_uS2_CS"/>
</dbReference>
<dbReference type="InterPro" id="IPR023591">
    <property type="entry name" value="Ribosomal_uS2_flav_dom_sf"/>
</dbReference>
<dbReference type="NCBIfam" id="TIGR01011">
    <property type="entry name" value="rpsB_bact"/>
    <property type="match status" value="1"/>
</dbReference>
<dbReference type="PANTHER" id="PTHR12534">
    <property type="entry name" value="30S RIBOSOMAL PROTEIN S2 PROKARYOTIC AND ORGANELLAR"/>
    <property type="match status" value="1"/>
</dbReference>
<dbReference type="PANTHER" id="PTHR12534:SF0">
    <property type="entry name" value="SMALL RIBOSOMAL SUBUNIT PROTEIN US2M"/>
    <property type="match status" value="1"/>
</dbReference>
<dbReference type="Pfam" id="PF00318">
    <property type="entry name" value="Ribosomal_S2"/>
    <property type="match status" value="1"/>
</dbReference>
<dbReference type="PRINTS" id="PR00395">
    <property type="entry name" value="RIBOSOMALS2"/>
</dbReference>
<dbReference type="SUPFAM" id="SSF52313">
    <property type="entry name" value="Ribosomal protein S2"/>
    <property type="match status" value="1"/>
</dbReference>
<dbReference type="PROSITE" id="PS00962">
    <property type="entry name" value="RIBOSOMAL_S2_1"/>
    <property type="match status" value="1"/>
</dbReference>
<feature type="chain" id="PRO_0000352002" description="Small ribosomal subunit protein uS2">
    <location>
        <begin position="1"/>
        <end position="294"/>
    </location>
</feature>
<feature type="region of interest" description="Disordered" evidence="2">
    <location>
        <begin position="261"/>
        <end position="294"/>
    </location>
</feature>
<feature type="compositionally biased region" description="Basic and acidic residues" evidence="2">
    <location>
        <begin position="261"/>
        <end position="274"/>
    </location>
</feature>
<reference key="1">
    <citation type="journal article" date="2006" name="Proc. Natl. Acad. Sci. U.S.A.">
        <title>Genome reduction in Leptospira borgpetersenii reflects limited transmission potential.</title>
        <authorList>
            <person name="Bulach D.M."/>
            <person name="Zuerner R.L."/>
            <person name="Wilson P."/>
            <person name="Seemann T."/>
            <person name="McGrath A."/>
            <person name="Cullen P.A."/>
            <person name="Davis J."/>
            <person name="Johnson M."/>
            <person name="Kuczek E."/>
            <person name="Alt D.P."/>
            <person name="Peterson-Burch B."/>
            <person name="Coppel R.L."/>
            <person name="Rood J.I."/>
            <person name="Davies J.K."/>
            <person name="Adler B."/>
        </authorList>
    </citation>
    <scope>NUCLEOTIDE SEQUENCE [LARGE SCALE GENOMIC DNA]</scope>
    <source>
        <strain>JB197</strain>
    </source>
</reference>
<protein>
    <recommendedName>
        <fullName evidence="1">Small ribosomal subunit protein uS2</fullName>
    </recommendedName>
    <alternativeName>
        <fullName evidence="3">30S ribosomal protein S2</fullName>
    </alternativeName>
</protein>
<gene>
    <name evidence="1" type="primary">rpsB</name>
    <name type="ordered locus">LBJ_0904</name>
</gene>
<sequence>MSVISMKNLLETGVHFGHQTRKWNPKMAPYVFTARNGIHIIDLQKTVQKAKEAYDALKKLTSEGKKVLFVGTKKQARGAIEREALHSNMFFINNRWPGGLLTNWNTVKKSIARLKKLEAMEADNSFEKEVKTKKEVLTLRRELEKLRKTLGGIKDMATIPEIMFVIDPKKEEIAVKEARKLGLKIFAVVDTNCDPELIDYPIPGNDDAIRAISLFLETMSNAVIEGTGGVVEQPRFSEDLDSEALALEYQGEYDESGKFIMDEDADSKKSKAEEPVIPTAEEPAITTIEVDQNE</sequence>
<accession>Q04U72</accession>
<evidence type="ECO:0000255" key="1">
    <source>
        <dbReference type="HAMAP-Rule" id="MF_00291"/>
    </source>
</evidence>
<evidence type="ECO:0000256" key="2">
    <source>
        <dbReference type="SAM" id="MobiDB-lite"/>
    </source>
</evidence>
<evidence type="ECO:0000305" key="3"/>